<organism>
    <name type="scientific">Meyerozyma guilliermondii (strain ATCC 6260 / CBS 566 / DSM 6381 / JCM 1539 / NBRC 10279 / NRRL Y-324)</name>
    <name type="common">Yeast</name>
    <name type="synonym">Candida guilliermondii</name>
    <dbReference type="NCBI Taxonomy" id="294746"/>
    <lineage>
        <taxon>Eukaryota</taxon>
        <taxon>Fungi</taxon>
        <taxon>Dikarya</taxon>
        <taxon>Ascomycota</taxon>
        <taxon>Saccharomycotina</taxon>
        <taxon>Pichiomycetes</taxon>
        <taxon>Debaryomycetaceae</taxon>
        <taxon>Meyerozyma</taxon>
    </lineage>
</organism>
<feature type="chain" id="PRO_0000405907" description="Phosphatidylethanolamine N-methyltransferase">
    <location>
        <begin position="1"/>
        <end position="875"/>
    </location>
</feature>
<feature type="topological domain" description="Lumenal" evidence="1">
    <location>
        <begin position="1"/>
        <end position="44"/>
    </location>
</feature>
<feature type="transmembrane region" description="Helical" evidence="1">
    <location>
        <begin position="45"/>
        <end position="65"/>
    </location>
</feature>
<feature type="topological domain" description="Cytoplasmic" evidence="1">
    <location>
        <begin position="66"/>
        <end position="73"/>
    </location>
</feature>
<feature type="transmembrane region" description="Helical" evidence="1">
    <location>
        <begin position="74"/>
        <end position="94"/>
    </location>
</feature>
<feature type="topological domain" description="Lumenal" evidence="1">
    <location>
        <begin position="95"/>
        <end position="154"/>
    </location>
</feature>
<feature type="transmembrane region" description="Helical" evidence="1">
    <location>
        <begin position="155"/>
        <end position="175"/>
    </location>
</feature>
<feature type="topological domain" description="Cytoplasmic" evidence="1">
    <location>
        <begin position="176"/>
        <end position="189"/>
    </location>
</feature>
<feature type="transmembrane region" description="Helical" evidence="1">
    <location>
        <begin position="190"/>
        <end position="210"/>
    </location>
</feature>
<feature type="topological domain" description="Lumenal" evidence="1">
    <location>
        <begin position="211"/>
        <end position="245"/>
    </location>
</feature>
<feature type="transmembrane region" description="Helical" evidence="1">
    <location>
        <begin position="246"/>
        <end position="266"/>
    </location>
</feature>
<feature type="topological domain" description="Cytoplasmic" evidence="1">
    <location>
        <begin position="267"/>
        <end position="270"/>
    </location>
</feature>
<feature type="transmembrane region" description="Helical" evidence="1">
    <location>
        <begin position="271"/>
        <end position="291"/>
    </location>
</feature>
<feature type="topological domain" description="Lumenal" evidence="1">
    <location>
        <begin position="292"/>
        <end position="339"/>
    </location>
</feature>
<feature type="transmembrane region" description="Helical" evidence="1">
    <location>
        <begin position="340"/>
        <end position="360"/>
    </location>
</feature>
<feature type="topological domain" description="Cytoplasmic" evidence="1">
    <location>
        <begin position="361"/>
        <end position="376"/>
    </location>
</feature>
<feature type="transmembrane region" description="Helical" evidence="1">
    <location>
        <begin position="377"/>
        <end position="397"/>
    </location>
</feature>
<feature type="topological domain" description="Lumenal" evidence="1">
    <location>
        <begin position="398"/>
        <end position="422"/>
    </location>
</feature>
<feature type="transmembrane region" description="Helical" evidence="1">
    <location>
        <begin position="423"/>
        <end position="443"/>
    </location>
</feature>
<feature type="topological domain" description="Cytoplasmic" evidence="1">
    <location>
        <begin position="444"/>
        <end position="464"/>
    </location>
</feature>
<feature type="transmembrane region" description="Helical" evidence="1">
    <location>
        <begin position="465"/>
        <end position="485"/>
    </location>
</feature>
<feature type="topological domain" description="Lumenal" evidence="1">
    <location>
        <begin position="486"/>
        <end position="526"/>
    </location>
</feature>
<feature type="transmembrane region" description="Helical" evidence="1">
    <location>
        <begin position="527"/>
        <end position="547"/>
    </location>
</feature>
<feature type="topological domain" description="Cytoplasmic" evidence="1">
    <location>
        <begin position="548"/>
        <end position="875"/>
    </location>
</feature>
<comment type="function">
    <text evidence="1">Catalyzes the first step of the methylation pathway of phosphatidylcholine biosynthesis, the SAM-dependent methylation of phosphatidylethanolamine (PE) to phosphatidylmonomethylethanolamine (PMME).</text>
</comment>
<comment type="catalytic activity">
    <reaction evidence="1">
        <text>a 1,2-diacyl-sn-glycero-3-phosphoethanolamine + S-adenosyl-L-methionine = a 1,2-diacyl-sn-glycero-3-phospho-N-methylethanolamine + S-adenosyl-L-homocysteine + H(+)</text>
        <dbReference type="Rhea" id="RHEA:11164"/>
        <dbReference type="ChEBI" id="CHEBI:15378"/>
        <dbReference type="ChEBI" id="CHEBI:57856"/>
        <dbReference type="ChEBI" id="CHEBI:59789"/>
        <dbReference type="ChEBI" id="CHEBI:64573"/>
        <dbReference type="ChEBI" id="CHEBI:64612"/>
        <dbReference type="EC" id="2.1.1.17"/>
    </reaction>
</comment>
<comment type="pathway">
    <text evidence="1">Phospholipid metabolism; phosphatidylcholine biosynthesis.</text>
</comment>
<comment type="subcellular location">
    <subcellularLocation>
        <location evidence="1">Endoplasmic reticulum membrane</location>
        <topology evidence="1">Multi-pass membrane protein</topology>
    </subcellularLocation>
</comment>
<comment type="similarity">
    <text evidence="1">Belongs to the class VI-like SAM-binding methyltransferase superfamily. CHO2 family.</text>
</comment>
<keyword id="KW-0256">Endoplasmic reticulum</keyword>
<keyword id="KW-0444">Lipid biosynthesis</keyword>
<keyword id="KW-0443">Lipid metabolism</keyword>
<keyword id="KW-0472">Membrane</keyword>
<keyword id="KW-0489">Methyltransferase</keyword>
<keyword id="KW-0594">Phospholipid biosynthesis</keyword>
<keyword id="KW-1208">Phospholipid metabolism</keyword>
<keyword id="KW-1185">Reference proteome</keyword>
<keyword id="KW-0949">S-adenosyl-L-methionine</keyword>
<keyword id="KW-0808">Transferase</keyword>
<keyword id="KW-0812">Transmembrane</keyword>
<keyword id="KW-1133">Transmembrane helix</keyword>
<proteinExistence type="inferred from homology"/>
<sequence>MAVALQQQSKTNMGPKGITFSGNTFTVPETHDMVKTLFDPTVRKSYFELVILALLASNGLVFWLVKTNSTRIEIFIGLYLFWRLSYNFGIGYLLHQQSNYHKLVNWANKLNIFDEKNHSIASRLIKSEISAQMGPKYKISKYPVDFNTWLVFRKVVDLILMSDFTTFIGVVVTCAMDNDLQFLNTSQQEPWIVYSRLIVGAGLILFNLWVKVDAHNIIKDYAWYWGDFFFRQINNEDLIFDGVFEMFPHPMYSVGYAGYYGFALIAKSYRVLVVAVFGHFLQMIFLHYIENPHIDKLYGPSGNEADYQKITKIKDLKNFDNLKPLVGLYNFSWLRAADLLTLIMVTTYSVIIPAFASSIVGTAQFRGAKINIAHCMFALTVAIKVFESLSINIFLVLQSYYKLFTKRYLANDIPIEKSLSNWAIIYNGLISWTYASFVGLNFFHYITGMEYSKFYFYDWVYLRSFLGALLILTQVWINSSIIDSIGYFGWFYGDFFLPTSPQRSHLTKAGVYRYLNNPEQLFGVCGVMGLTLIAPSLENFVCCLLWVSNNFFRINFVEKVHMIKVYGEKEVFQDSGVTKTFKKQLIPDVISRRLSSNDEAPNFGRHRSTSHLVTGITDTLESFIKELRQSNAKLSRQNLLELSQNLYFDNSDYQITIDNLQKSDDRMPKYTTIGTPIEITWKCPENHSDKDWIGLYKVVQTTYSRSKTLISSSGRWTWVESTRGSYVFTGSKLFWEEGIYEFRFHLDGKHEVAYISEPFEIKAPKIEVPDTLSASKEFAEQLKLSVFDPVTDIKIPSIESPICDTVEKSHHLLETYRRLAKLISTSTGITISSNFLFNAGTEHELSVHQLSKKLINIKKVLEDLSPAAIDEKKRQ</sequence>
<gene>
    <name type="primary">CHO2</name>
    <name type="ORF">PGUG_04030</name>
</gene>
<protein>
    <recommendedName>
        <fullName evidence="1">Phosphatidylethanolamine N-methyltransferase</fullName>
        <shortName evidence="1">PE methyltransferase</shortName>
        <shortName evidence="1">PEAMT</shortName>
        <shortName evidence="1">PEMT</shortName>
        <ecNumber evidence="1">2.1.1.17</ecNumber>
    </recommendedName>
</protein>
<reference key="1">
    <citation type="journal article" date="2009" name="Nature">
        <title>Evolution of pathogenicity and sexual reproduction in eight Candida genomes.</title>
        <authorList>
            <person name="Butler G."/>
            <person name="Rasmussen M.D."/>
            <person name="Lin M.F."/>
            <person name="Santos M.A.S."/>
            <person name="Sakthikumar S."/>
            <person name="Munro C.A."/>
            <person name="Rheinbay E."/>
            <person name="Grabherr M."/>
            <person name="Forche A."/>
            <person name="Reedy J.L."/>
            <person name="Agrafioti I."/>
            <person name="Arnaud M.B."/>
            <person name="Bates S."/>
            <person name="Brown A.J.P."/>
            <person name="Brunke S."/>
            <person name="Costanzo M.C."/>
            <person name="Fitzpatrick D.A."/>
            <person name="de Groot P.W.J."/>
            <person name="Harris D."/>
            <person name="Hoyer L.L."/>
            <person name="Hube B."/>
            <person name="Klis F.M."/>
            <person name="Kodira C."/>
            <person name="Lennard N."/>
            <person name="Logue M.E."/>
            <person name="Martin R."/>
            <person name="Neiman A.M."/>
            <person name="Nikolaou E."/>
            <person name="Quail M.A."/>
            <person name="Quinn J."/>
            <person name="Santos M.C."/>
            <person name="Schmitzberger F.F."/>
            <person name="Sherlock G."/>
            <person name="Shah P."/>
            <person name="Silverstein K.A.T."/>
            <person name="Skrzypek M.S."/>
            <person name="Soll D."/>
            <person name="Staggs R."/>
            <person name="Stansfield I."/>
            <person name="Stumpf M.P.H."/>
            <person name="Sudbery P.E."/>
            <person name="Srikantha T."/>
            <person name="Zeng Q."/>
            <person name="Berman J."/>
            <person name="Berriman M."/>
            <person name="Heitman J."/>
            <person name="Gow N.A.R."/>
            <person name="Lorenz M.C."/>
            <person name="Birren B.W."/>
            <person name="Kellis M."/>
            <person name="Cuomo C.A."/>
        </authorList>
    </citation>
    <scope>NUCLEOTIDE SEQUENCE [LARGE SCALE GENOMIC DNA]</scope>
    <source>
        <strain>ATCC 6260 / CBS 566 / DSM 6381 / JCM 1539 / NBRC 10279 / NRRL Y-324</strain>
    </source>
</reference>
<evidence type="ECO:0000255" key="1">
    <source>
        <dbReference type="HAMAP-Rule" id="MF_03217"/>
    </source>
</evidence>
<accession>A5DL79</accession>
<name>CHO2_PICGU</name>
<dbReference type="EC" id="2.1.1.17" evidence="1"/>
<dbReference type="EMBL" id="CH408159">
    <property type="protein sequence ID" value="EDK39932.2"/>
    <property type="molecule type" value="Genomic_DNA"/>
</dbReference>
<dbReference type="RefSeq" id="XP_001483301.1">
    <property type="nucleotide sequence ID" value="XM_001483251.1"/>
</dbReference>
<dbReference type="SMR" id="A5DL79"/>
<dbReference type="FunCoup" id="A5DL79">
    <property type="interactions" value="77"/>
</dbReference>
<dbReference type="STRING" id="294746.A5DL79"/>
<dbReference type="GeneID" id="5125230"/>
<dbReference type="KEGG" id="pgu:PGUG_04030"/>
<dbReference type="VEuPathDB" id="FungiDB:PGUG_04030"/>
<dbReference type="eggNOG" id="ENOG502QRGH">
    <property type="taxonomic scope" value="Eukaryota"/>
</dbReference>
<dbReference type="HOGENOM" id="CLU_005987_0_1_1"/>
<dbReference type="InParanoid" id="A5DL79"/>
<dbReference type="OMA" id="RIWYSVG"/>
<dbReference type="OrthoDB" id="4583at2759"/>
<dbReference type="UniPathway" id="UPA00753"/>
<dbReference type="Proteomes" id="UP000001997">
    <property type="component" value="Unassembled WGS sequence"/>
</dbReference>
<dbReference type="GO" id="GO:0005789">
    <property type="term" value="C:endoplasmic reticulum membrane"/>
    <property type="evidence" value="ECO:0007669"/>
    <property type="project" value="UniProtKB-SubCell"/>
</dbReference>
<dbReference type="GO" id="GO:0004608">
    <property type="term" value="F:phosphatidylethanolamine N-methyltransferase activity"/>
    <property type="evidence" value="ECO:0007669"/>
    <property type="project" value="UniProtKB-UniRule"/>
</dbReference>
<dbReference type="GO" id="GO:0032259">
    <property type="term" value="P:methylation"/>
    <property type="evidence" value="ECO:0007669"/>
    <property type="project" value="UniProtKB-KW"/>
</dbReference>
<dbReference type="GO" id="GO:0006656">
    <property type="term" value="P:phosphatidylcholine biosynthetic process"/>
    <property type="evidence" value="ECO:0007669"/>
    <property type="project" value="UniProtKB-UniRule"/>
</dbReference>
<dbReference type="Gene3D" id="1.20.120.1630">
    <property type="match status" value="1"/>
</dbReference>
<dbReference type="Gene3D" id="2.60.40.2840">
    <property type="match status" value="1"/>
</dbReference>
<dbReference type="HAMAP" id="MF_03217">
    <property type="entry name" value="PEMT"/>
    <property type="match status" value="1"/>
</dbReference>
<dbReference type="InterPro" id="IPR007318">
    <property type="entry name" value="Phopholipid_MeTrfase"/>
</dbReference>
<dbReference type="InterPro" id="IPR016219">
    <property type="entry name" value="Phosphatid-EA_MeTrfase_fun"/>
</dbReference>
<dbReference type="PANTHER" id="PTHR32138">
    <property type="entry name" value="PHOSPHATIDYLETHANOLAMINE N-METHYLTRANSFERASE"/>
    <property type="match status" value="1"/>
</dbReference>
<dbReference type="PANTHER" id="PTHR32138:SF0">
    <property type="entry name" value="PHOSPHATIDYLETHANOLAMINE N-METHYLTRANSFERASE"/>
    <property type="match status" value="1"/>
</dbReference>
<dbReference type="Pfam" id="PF04191">
    <property type="entry name" value="PEMT"/>
    <property type="match status" value="2"/>
</dbReference>
<dbReference type="PIRSF" id="PIRSF000383">
    <property type="entry name" value="PEAMT"/>
    <property type="match status" value="1"/>
</dbReference>
<dbReference type="PROSITE" id="PS51598">
    <property type="entry name" value="SAM_CHO2"/>
    <property type="match status" value="1"/>
</dbReference>